<accession>Q04YW0</accession>
<proteinExistence type="inferred from homology"/>
<sequence>MSYNHKNVLDTEQFSKSDLDFLIKKIKDMEHLVERHKAFGILTGKLLASLFFEASTRTRLSFEAAMERLGGRVISTVGFQFSSISKGETLYDTMKMVEAYADIAVIRHPVEGSSRIAAGAVKIPVVNAGDGAGQHPTQAILDLYTIISEKGTLDGLSVAFIGDLKYGRTIHSLINLLRHYKVRLYLISPIELALPDSYKKGLEGYPLTLEETTDIKAVWECDVAYVTRIQEERFPDHKEYERLKDLFKINKELILASKKETTILHPLPRVNELSTDVDDLPNAAYFRQARYGVVSRMTLLCLCLGQDF</sequence>
<organism>
    <name type="scientific">Leptospira borgpetersenii serovar Hardjo-bovis (strain L550)</name>
    <dbReference type="NCBI Taxonomy" id="355276"/>
    <lineage>
        <taxon>Bacteria</taxon>
        <taxon>Pseudomonadati</taxon>
        <taxon>Spirochaetota</taxon>
        <taxon>Spirochaetia</taxon>
        <taxon>Leptospirales</taxon>
        <taxon>Leptospiraceae</taxon>
        <taxon>Leptospira</taxon>
    </lineage>
</organism>
<evidence type="ECO:0000255" key="1">
    <source>
        <dbReference type="HAMAP-Rule" id="MF_00001"/>
    </source>
</evidence>
<comment type="function">
    <text evidence="1">Catalyzes the condensation of carbamoyl phosphate and aspartate to form carbamoyl aspartate and inorganic phosphate, the committed step in the de novo pyrimidine nucleotide biosynthesis pathway.</text>
</comment>
<comment type="catalytic activity">
    <reaction evidence="1">
        <text>carbamoyl phosphate + L-aspartate = N-carbamoyl-L-aspartate + phosphate + H(+)</text>
        <dbReference type="Rhea" id="RHEA:20013"/>
        <dbReference type="ChEBI" id="CHEBI:15378"/>
        <dbReference type="ChEBI" id="CHEBI:29991"/>
        <dbReference type="ChEBI" id="CHEBI:32814"/>
        <dbReference type="ChEBI" id="CHEBI:43474"/>
        <dbReference type="ChEBI" id="CHEBI:58228"/>
        <dbReference type="EC" id="2.1.3.2"/>
    </reaction>
</comment>
<comment type="pathway">
    <text evidence="1">Pyrimidine metabolism; UMP biosynthesis via de novo pathway; (S)-dihydroorotate from bicarbonate: step 2/3.</text>
</comment>
<comment type="subunit">
    <text evidence="1">Heterododecamer (2C3:3R2) of six catalytic PyrB chains organized as two trimers (C3), and six regulatory PyrI chains organized as three dimers (R2).</text>
</comment>
<comment type="similarity">
    <text evidence="1">Belongs to the aspartate/ornithine carbamoyltransferase superfamily. ATCase family.</text>
</comment>
<reference key="1">
    <citation type="journal article" date="2006" name="Proc. Natl. Acad. Sci. U.S.A.">
        <title>Genome reduction in Leptospira borgpetersenii reflects limited transmission potential.</title>
        <authorList>
            <person name="Bulach D.M."/>
            <person name="Zuerner R.L."/>
            <person name="Wilson P."/>
            <person name="Seemann T."/>
            <person name="McGrath A."/>
            <person name="Cullen P.A."/>
            <person name="Davis J."/>
            <person name="Johnson M."/>
            <person name="Kuczek E."/>
            <person name="Alt D.P."/>
            <person name="Peterson-Burch B."/>
            <person name="Coppel R.L."/>
            <person name="Rood J.I."/>
            <person name="Davies J.K."/>
            <person name="Adler B."/>
        </authorList>
    </citation>
    <scope>NUCLEOTIDE SEQUENCE [LARGE SCALE GENOMIC DNA]</scope>
    <source>
        <strain>L550</strain>
    </source>
</reference>
<keyword id="KW-0665">Pyrimidine biosynthesis</keyword>
<keyword id="KW-0808">Transferase</keyword>
<dbReference type="EC" id="2.1.3.2" evidence="1"/>
<dbReference type="EMBL" id="CP000348">
    <property type="protein sequence ID" value="ABJ79735.1"/>
    <property type="molecule type" value="Genomic_DNA"/>
</dbReference>
<dbReference type="RefSeq" id="WP_011670737.1">
    <property type="nucleotide sequence ID" value="NC_008508.1"/>
</dbReference>
<dbReference type="SMR" id="Q04YW0"/>
<dbReference type="KEGG" id="lbl:LBL_2345"/>
<dbReference type="HOGENOM" id="CLU_043846_1_2_12"/>
<dbReference type="UniPathway" id="UPA00070">
    <property type="reaction ID" value="UER00116"/>
</dbReference>
<dbReference type="GO" id="GO:0016597">
    <property type="term" value="F:amino acid binding"/>
    <property type="evidence" value="ECO:0007669"/>
    <property type="project" value="InterPro"/>
</dbReference>
<dbReference type="GO" id="GO:0004070">
    <property type="term" value="F:aspartate carbamoyltransferase activity"/>
    <property type="evidence" value="ECO:0007669"/>
    <property type="project" value="UniProtKB-UniRule"/>
</dbReference>
<dbReference type="GO" id="GO:0006207">
    <property type="term" value="P:'de novo' pyrimidine nucleobase biosynthetic process"/>
    <property type="evidence" value="ECO:0007669"/>
    <property type="project" value="InterPro"/>
</dbReference>
<dbReference type="GO" id="GO:0044205">
    <property type="term" value="P:'de novo' UMP biosynthetic process"/>
    <property type="evidence" value="ECO:0007669"/>
    <property type="project" value="UniProtKB-UniRule"/>
</dbReference>
<dbReference type="GO" id="GO:0006520">
    <property type="term" value="P:amino acid metabolic process"/>
    <property type="evidence" value="ECO:0007669"/>
    <property type="project" value="InterPro"/>
</dbReference>
<dbReference type="FunFam" id="3.40.50.1370:FF:000021">
    <property type="entry name" value="Aspartate carbamoyltransferase"/>
    <property type="match status" value="1"/>
</dbReference>
<dbReference type="Gene3D" id="3.40.50.1370">
    <property type="entry name" value="Aspartate/ornithine carbamoyltransferase"/>
    <property type="match status" value="2"/>
</dbReference>
<dbReference type="HAMAP" id="MF_00001">
    <property type="entry name" value="Asp_carb_tr"/>
    <property type="match status" value="1"/>
</dbReference>
<dbReference type="InterPro" id="IPR006132">
    <property type="entry name" value="Asp/Orn_carbamoyltranf_P-bd"/>
</dbReference>
<dbReference type="InterPro" id="IPR006130">
    <property type="entry name" value="Asp/Orn_carbamoylTrfase"/>
</dbReference>
<dbReference type="InterPro" id="IPR036901">
    <property type="entry name" value="Asp/Orn_carbamoylTrfase_sf"/>
</dbReference>
<dbReference type="InterPro" id="IPR002082">
    <property type="entry name" value="Asp_carbamoyltransf"/>
</dbReference>
<dbReference type="InterPro" id="IPR006131">
    <property type="entry name" value="Asp_carbamoyltransf_Asp/Orn-bd"/>
</dbReference>
<dbReference type="NCBIfam" id="TIGR00670">
    <property type="entry name" value="asp_carb_tr"/>
    <property type="match status" value="1"/>
</dbReference>
<dbReference type="NCBIfam" id="NF002032">
    <property type="entry name" value="PRK00856.1"/>
    <property type="match status" value="1"/>
</dbReference>
<dbReference type="PANTHER" id="PTHR45753:SF6">
    <property type="entry name" value="ASPARTATE CARBAMOYLTRANSFERASE"/>
    <property type="match status" value="1"/>
</dbReference>
<dbReference type="PANTHER" id="PTHR45753">
    <property type="entry name" value="ORNITHINE CARBAMOYLTRANSFERASE, MITOCHONDRIAL"/>
    <property type="match status" value="1"/>
</dbReference>
<dbReference type="Pfam" id="PF00185">
    <property type="entry name" value="OTCace"/>
    <property type="match status" value="1"/>
</dbReference>
<dbReference type="Pfam" id="PF02729">
    <property type="entry name" value="OTCace_N"/>
    <property type="match status" value="1"/>
</dbReference>
<dbReference type="PRINTS" id="PR00100">
    <property type="entry name" value="AOTCASE"/>
</dbReference>
<dbReference type="PRINTS" id="PR00101">
    <property type="entry name" value="ATCASE"/>
</dbReference>
<dbReference type="SUPFAM" id="SSF53671">
    <property type="entry name" value="Aspartate/ornithine carbamoyltransferase"/>
    <property type="match status" value="1"/>
</dbReference>
<dbReference type="PROSITE" id="PS00097">
    <property type="entry name" value="CARBAMOYLTRANSFERASE"/>
    <property type="match status" value="1"/>
</dbReference>
<name>PYRB_LEPBL</name>
<feature type="chain" id="PRO_0000321115" description="Aspartate carbamoyltransferase catalytic subunit">
    <location>
        <begin position="1"/>
        <end position="308"/>
    </location>
</feature>
<feature type="binding site" evidence="1">
    <location>
        <position position="57"/>
    </location>
    <ligand>
        <name>carbamoyl phosphate</name>
        <dbReference type="ChEBI" id="CHEBI:58228"/>
    </ligand>
</feature>
<feature type="binding site" evidence="1">
    <location>
        <position position="58"/>
    </location>
    <ligand>
        <name>carbamoyl phosphate</name>
        <dbReference type="ChEBI" id="CHEBI:58228"/>
    </ligand>
</feature>
<feature type="binding site" evidence="1">
    <location>
        <position position="86"/>
    </location>
    <ligand>
        <name>L-aspartate</name>
        <dbReference type="ChEBI" id="CHEBI:29991"/>
    </ligand>
</feature>
<feature type="binding site" evidence="1">
    <location>
        <position position="107"/>
    </location>
    <ligand>
        <name>carbamoyl phosphate</name>
        <dbReference type="ChEBI" id="CHEBI:58228"/>
    </ligand>
</feature>
<feature type="binding site" evidence="1">
    <location>
        <position position="135"/>
    </location>
    <ligand>
        <name>carbamoyl phosphate</name>
        <dbReference type="ChEBI" id="CHEBI:58228"/>
    </ligand>
</feature>
<feature type="binding site" evidence="1">
    <location>
        <position position="138"/>
    </location>
    <ligand>
        <name>carbamoyl phosphate</name>
        <dbReference type="ChEBI" id="CHEBI:58228"/>
    </ligand>
</feature>
<feature type="binding site" evidence="1">
    <location>
        <position position="168"/>
    </location>
    <ligand>
        <name>L-aspartate</name>
        <dbReference type="ChEBI" id="CHEBI:29991"/>
    </ligand>
</feature>
<feature type="binding site" evidence="1">
    <location>
        <position position="228"/>
    </location>
    <ligand>
        <name>L-aspartate</name>
        <dbReference type="ChEBI" id="CHEBI:29991"/>
    </ligand>
</feature>
<feature type="binding site" evidence="1">
    <location>
        <position position="267"/>
    </location>
    <ligand>
        <name>carbamoyl phosphate</name>
        <dbReference type="ChEBI" id="CHEBI:58228"/>
    </ligand>
</feature>
<feature type="binding site" evidence="1">
    <location>
        <position position="268"/>
    </location>
    <ligand>
        <name>carbamoyl phosphate</name>
        <dbReference type="ChEBI" id="CHEBI:58228"/>
    </ligand>
</feature>
<gene>
    <name evidence="1" type="primary">pyrB</name>
    <name type="ordered locus">LBL_2345</name>
</gene>
<protein>
    <recommendedName>
        <fullName evidence="1">Aspartate carbamoyltransferase catalytic subunit</fullName>
        <ecNumber evidence="1">2.1.3.2</ecNumber>
    </recommendedName>
    <alternativeName>
        <fullName evidence="1">Aspartate transcarbamylase</fullName>
        <shortName evidence="1">ATCase</shortName>
    </alternativeName>
</protein>